<comment type="function">
    <text evidence="1">Required for the export of mRNAs containing poly(A) tails from the nucleus into the cytoplasm. May be involved in the terminal step of the mRNA transport through the nuclear pore complex (NPC) (By similarity).</text>
</comment>
<comment type="subunit">
    <text evidence="1">Associated with the NPC, however it may not be a stable component of the NPC complex since it shuttles between the nucleus and the cytoplasm. Interacts with nuclear pore complex proteins NUP155 and NUPL2 (By similarity).</text>
</comment>
<comment type="subcellular location">
    <subcellularLocation>
        <location evidence="2">Nucleus</location>
    </subcellularLocation>
    <subcellularLocation>
        <location evidence="2">Cytoplasm</location>
    </subcellularLocation>
    <subcellularLocation>
        <location evidence="2">Nucleus</location>
        <location evidence="2">Nuclear pore complex</location>
    </subcellularLocation>
    <text evidence="2">Shuttles between the nucleus and the cytoplasm. Shuttling is essential for its mRNA export function.</text>
</comment>
<comment type="similarity">
    <text evidence="5">Belongs to the GLE1 family.</text>
</comment>
<gene>
    <name type="primary">GLE1</name>
    <name type="synonym">GLE1L</name>
</gene>
<proteinExistence type="evidence at transcript level"/>
<sequence length="698" mass="79911">MPSEGRCWETLQALRSSDKGRLCYYRDWLLRGEDVLEECMCLPKLSSYSGWVVEHVLPHMQENQPLSETSPSSTSASALDQPSFVPKSPDTSSAFSPASPATPNGTKGKDESQHTESMVLQSSRGIKVEGCIRMYELVHRMKGTEGLRQWQEEQERKVRALSEMASEQLKRFDEWKELKQHKEFQDLREVMEKSSREALGHQEKLKAEHRHRAKILNLKLREAEQQRVKQAEQERLRKEEGQVRLRALYALREEMLQLSQQLDASEQHKGLLKVDLAAFQTRGNQLCSLISGIIRASSESGYPTTESQAEAERALQEMRDLLMNLGQEITRACEDKRRQDEEEAQVKLQEAQMQQRPEAHKEPPAPSQGPGGKQNEDLQVKVQDITMQWYQQLQDASMQCVLTFEGLTNSKDSQAKKIKMDLQKAATIPVSQISTIAGSKLKEIFDKIHSLLSGKPVQSGGRSVSVTLNPQGLDFVQYKLAEKFVKQGEEEVASHHEAAFPIAVVASGIWELHPRVGDLILAHLHKKCPYSVPFYPTFKEGMALEDYQRMLGYQVKDSKVEQQDNFLKRMSGMIRLYAAIIQLRWPYGNRQEIHPHGLNHGWRWLAQILNMEPLSDVTATLLFDFLEVCGNALMKQYQVQFWKMLILIKEDYFPRIEAITSSGQMGSFIRLKQFLEKCLQHKDIPVPKGFLTSSFWRS</sequence>
<accession>Q5RAS2</accession>
<keyword id="KW-0175">Coiled coil</keyword>
<keyword id="KW-0963">Cytoplasm</keyword>
<keyword id="KW-0509">mRNA transport</keyword>
<keyword id="KW-0906">Nuclear pore complex</keyword>
<keyword id="KW-0539">Nucleus</keyword>
<keyword id="KW-0597">Phosphoprotein</keyword>
<keyword id="KW-0653">Protein transport</keyword>
<keyword id="KW-1185">Reference proteome</keyword>
<keyword id="KW-0811">Translocation</keyword>
<keyword id="KW-0813">Transport</keyword>
<feature type="chain" id="PRO_0000204824" description="mRNA export factor GLE1">
    <location>
        <begin position="1"/>
        <end position="698"/>
    </location>
</feature>
<feature type="region of interest" description="Interaction with NUP155" evidence="1">
    <location>
        <begin position="1"/>
        <end position="29"/>
    </location>
</feature>
<feature type="region of interest" description="Disordered" evidence="4">
    <location>
        <begin position="63"/>
        <end position="121"/>
    </location>
</feature>
<feature type="region of interest" description="Disordered" evidence="4">
    <location>
        <begin position="335"/>
        <end position="375"/>
    </location>
</feature>
<feature type="region of interest" description="Mediates the shuttling between the nucleus and the cytoplasm" evidence="1">
    <location>
        <begin position="444"/>
        <end position="483"/>
    </location>
</feature>
<feature type="region of interest" description="Interaction with NUPL2" evidence="1">
    <location>
        <begin position="656"/>
        <end position="698"/>
    </location>
</feature>
<feature type="coiled-coil region" evidence="3">
    <location>
        <begin position="152"/>
        <end position="270"/>
    </location>
</feature>
<feature type="coiled-coil region" evidence="3">
    <location>
        <begin position="304"/>
        <end position="356"/>
    </location>
</feature>
<feature type="compositionally biased region" description="Low complexity" evidence="4">
    <location>
        <begin position="65"/>
        <end position="79"/>
    </location>
</feature>
<feature type="compositionally biased region" description="Low complexity" evidence="4">
    <location>
        <begin position="88"/>
        <end position="103"/>
    </location>
</feature>
<feature type="modified residue" description="Phosphoserine" evidence="2">
    <location>
        <position position="88"/>
    </location>
</feature>
<feature type="modified residue" description="Phosphoserine" evidence="2">
    <location>
        <position position="99"/>
    </location>
</feature>
<protein>
    <recommendedName>
        <fullName evidence="5">mRNA export factor GLE1</fullName>
    </recommendedName>
    <alternativeName>
        <fullName evidence="5">GLE1 RNA export mediator</fullName>
    </alternativeName>
    <alternativeName>
        <fullName evidence="5">GLE1-like protein</fullName>
    </alternativeName>
    <alternativeName>
        <fullName evidence="5">Nucleoporin GLE1</fullName>
    </alternativeName>
</protein>
<reference key="1">
    <citation type="submission" date="2004-11" db="EMBL/GenBank/DDBJ databases">
        <authorList>
            <consortium name="The German cDNA consortium"/>
        </authorList>
    </citation>
    <scope>NUCLEOTIDE SEQUENCE [LARGE SCALE MRNA]</scope>
    <source>
        <tissue>Kidney</tissue>
    </source>
</reference>
<name>GLE1_PONAB</name>
<dbReference type="EMBL" id="CR858940">
    <property type="protein sequence ID" value="CAH91138.1"/>
    <property type="molecule type" value="mRNA"/>
</dbReference>
<dbReference type="RefSeq" id="NP_001125666.1">
    <property type="nucleotide sequence ID" value="NM_001132194.1"/>
</dbReference>
<dbReference type="SMR" id="Q5RAS2"/>
<dbReference type="FunCoup" id="Q5RAS2">
    <property type="interactions" value="2934"/>
</dbReference>
<dbReference type="STRING" id="9601.ENSPPYP00000022028"/>
<dbReference type="GeneID" id="100172586"/>
<dbReference type="KEGG" id="pon:100172586"/>
<dbReference type="CTD" id="2733"/>
<dbReference type="eggNOG" id="KOG2412">
    <property type="taxonomic scope" value="Eukaryota"/>
</dbReference>
<dbReference type="InParanoid" id="Q5RAS2"/>
<dbReference type="OrthoDB" id="420884at2759"/>
<dbReference type="Proteomes" id="UP000001595">
    <property type="component" value="Unplaced"/>
</dbReference>
<dbReference type="GO" id="GO:0005737">
    <property type="term" value="C:cytoplasm"/>
    <property type="evidence" value="ECO:0007669"/>
    <property type="project" value="UniProtKB-SubCell"/>
</dbReference>
<dbReference type="GO" id="GO:0044614">
    <property type="term" value="C:nuclear pore cytoplasmic filaments"/>
    <property type="evidence" value="ECO:0007669"/>
    <property type="project" value="TreeGrafter"/>
</dbReference>
<dbReference type="GO" id="GO:0000822">
    <property type="term" value="F:inositol hexakisphosphate binding"/>
    <property type="evidence" value="ECO:0007669"/>
    <property type="project" value="TreeGrafter"/>
</dbReference>
<dbReference type="GO" id="GO:0005543">
    <property type="term" value="F:phospholipid binding"/>
    <property type="evidence" value="ECO:0007669"/>
    <property type="project" value="TreeGrafter"/>
</dbReference>
<dbReference type="GO" id="GO:0031369">
    <property type="term" value="F:translation initiation factor binding"/>
    <property type="evidence" value="ECO:0007669"/>
    <property type="project" value="TreeGrafter"/>
</dbReference>
<dbReference type="GO" id="GO:0016973">
    <property type="term" value="P:poly(A)+ mRNA export from nucleus"/>
    <property type="evidence" value="ECO:0007669"/>
    <property type="project" value="InterPro"/>
</dbReference>
<dbReference type="GO" id="GO:0015031">
    <property type="term" value="P:protein transport"/>
    <property type="evidence" value="ECO:0007669"/>
    <property type="project" value="UniProtKB-KW"/>
</dbReference>
<dbReference type="FunFam" id="1.25.40.510:FF:000001">
    <property type="entry name" value="Nucleoporin GLE1 isoform 1"/>
    <property type="match status" value="1"/>
</dbReference>
<dbReference type="Gene3D" id="1.25.40.510">
    <property type="entry name" value="GLE1-like"/>
    <property type="match status" value="1"/>
</dbReference>
<dbReference type="InterPro" id="IPR012476">
    <property type="entry name" value="GLE1"/>
</dbReference>
<dbReference type="InterPro" id="IPR038506">
    <property type="entry name" value="GLE1-like_sf"/>
</dbReference>
<dbReference type="PANTHER" id="PTHR12960">
    <property type="entry name" value="GLE-1-RELATED"/>
    <property type="match status" value="1"/>
</dbReference>
<dbReference type="PANTHER" id="PTHR12960:SF0">
    <property type="entry name" value="MRNA EXPORT FACTOR GLE1"/>
    <property type="match status" value="1"/>
</dbReference>
<dbReference type="Pfam" id="PF07817">
    <property type="entry name" value="GLE1"/>
    <property type="match status" value="1"/>
</dbReference>
<evidence type="ECO:0000250" key="1"/>
<evidence type="ECO:0000250" key="2">
    <source>
        <dbReference type="UniProtKB" id="Q53GS7"/>
    </source>
</evidence>
<evidence type="ECO:0000255" key="3"/>
<evidence type="ECO:0000256" key="4">
    <source>
        <dbReference type="SAM" id="MobiDB-lite"/>
    </source>
</evidence>
<evidence type="ECO:0000305" key="5"/>
<organism>
    <name type="scientific">Pongo abelii</name>
    <name type="common">Sumatran orangutan</name>
    <name type="synonym">Pongo pygmaeus abelii</name>
    <dbReference type="NCBI Taxonomy" id="9601"/>
    <lineage>
        <taxon>Eukaryota</taxon>
        <taxon>Metazoa</taxon>
        <taxon>Chordata</taxon>
        <taxon>Craniata</taxon>
        <taxon>Vertebrata</taxon>
        <taxon>Euteleostomi</taxon>
        <taxon>Mammalia</taxon>
        <taxon>Eutheria</taxon>
        <taxon>Euarchontoglires</taxon>
        <taxon>Primates</taxon>
        <taxon>Haplorrhini</taxon>
        <taxon>Catarrhini</taxon>
        <taxon>Hominidae</taxon>
        <taxon>Pongo</taxon>
    </lineage>
</organism>